<name>ELBB_KLEOX</name>
<gene>
    <name type="primary">elbB</name>
</gene>
<feature type="chain" id="PRO_0000201683" description="Putative glyoxalase ElbB">
    <location>
        <begin position="1" status="less than"/>
        <end position="80"/>
    </location>
</feature>
<feature type="non-terminal residue">
    <location>
        <position position="1"/>
    </location>
</feature>
<evidence type="ECO:0000250" key="1">
    <source>
        <dbReference type="UniProtKB" id="P0ABU5"/>
    </source>
</evidence>
<evidence type="ECO:0000305" key="2"/>
<reference key="1">
    <citation type="journal article" date="1996" name="Mol. Microbiol.">
        <title>Monofunctional biosynthetic peptidoglycan transglycosylases.</title>
        <authorList>
            <person name="Spratt B.G."/>
            <person name="Zhou J."/>
            <person name="Taylor M."/>
            <person name="Merrick M.J."/>
        </authorList>
    </citation>
    <scope>NUCLEOTIDE SEQUENCE [GENOMIC DNA]</scope>
    <source>
        <strain>M5a1</strain>
    </source>
</reference>
<protein>
    <recommendedName>
        <fullName evidence="1">Putative glyoxalase ElbB</fullName>
        <ecNumber evidence="1">4.2.1.-</ecNumber>
    </recommendedName>
</protein>
<dbReference type="EC" id="4.2.1.-" evidence="1"/>
<dbReference type="EMBL" id="Z54198">
    <property type="protein sequence ID" value="CAA90902.1"/>
    <property type="molecule type" value="Genomic_DNA"/>
</dbReference>
<dbReference type="SMR" id="Q48464"/>
<dbReference type="STRING" id="571.AB185_09940"/>
<dbReference type="eggNOG" id="COG3155">
    <property type="taxonomic scope" value="Bacteria"/>
</dbReference>
<dbReference type="GO" id="GO:0016829">
    <property type="term" value="F:lyase activity"/>
    <property type="evidence" value="ECO:0007669"/>
    <property type="project" value="UniProtKB-KW"/>
</dbReference>
<dbReference type="Gene3D" id="3.40.50.880">
    <property type="match status" value="1"/>
</dbReference>
<dbReference type="InterPro" id="IPR029062">
    <property type="entry name" value="Class_I_gatase-like"/>
</dbReference>
<dbReference type="PANTHER" id="PTHR10224">
    <property type="entry name" value="ES1 PROTEIN HOMOLOG, MITOCHONDRIAL"/>
    <property type="match status" value="1"/>
</dbReference>
<dbReference type="PANTHER" id="PTHR10224:SF12">
    <property type="entry name" value="GLYOXALASE ELBB"/>
    <property type="match status" value="1"/>
</dbReference>
<dbReference type="SUPFAM" id="SSF52317">
    <property type="entry name" value="Class I glutamine amidotransferase-like"/>
    <property type="match status" value="1"/>
</dbReference>
<accession>Q48464</accession>
<sequence length="80" mass="8552">SLHRPPGCRHCVGQLRLCDLDTADAVEEMGAEHVPCPVDDIVVDEDNKVVTTPAYMLAQNIAEAASGIEKLVARVLVLTA</sequence>
<proteinExistence type="inferred from homology"/>
<organism>
    <name type="scientific">Klebsiella oxytoca</name>
    <dbReference type="NCBI Taxonomy" id="571"/>
    <lineage>
        <taxon>Bacteria</taxon>
        <taxon>Pseudomonadati</taxon>
        <taxon>Pseudomonadota</taxon>
        <taxon>Gammaproteobacteria</taxon>
        <taxon>Enterobacterales</taxon>
        <taxon>Enterobacteriaceae</taxon>
        <taxon>Klebsiella/Raoultella group</taxon>
        <taxon>Klebsiella</taxon>
    </lineage>
</organism>
<comment type="function">
    <text evidence="1">Displays glyoxalase activity, catalyzing the conversion of glyoxal to glycolate. However, this apparent glyoxalase activity may reflect a deglycase activity, which could be the primary function of this protein like other DJ-1 superfamily members such as PARK7, YajL, YhbO and HchA. Is not able to use methylglyoxal as substrate.</text>
</comment>
<comment type="catalytic activity">
    <reaction evidence="1">
        <text>glyoxal + H2O = glycolate + H(+)</text>
        <dbReference type="Rhea" id="RHEA:51672"/>
        <dbReference type="ChEBI" id="CHEBI:15377"/>
        <dbReference type="ChEBI" id="CHEBI:15378"/>
        <dbReference type="ChEBI" id="CHEBI:29805"/>
        <dbReference type="ChEBI" id="CHEBI:34779"/>
    </reaction>
</comment>
<comment type="subunit">
    <text evidence="1">Homodimer.</text>
</comment>
<comment type="similarity">
    <text evidence="2">Belongs to the peptidase C56 family.</text>
</comment>
<keyword id="KW-0456">Lyase</keyword>